<keyword id="KW-0966">Cell projection</keyword>
<keyword id="KW-0343">GTPase activation</keyword>
<keyword id="KW-0344">Guanine-nucleotide releasing factor</keyword>
<keyword id="KW-1185">Reference proteome</keyword>
<keyword id="KW-0770">Synapse</keyword>
<gene>
    <name type="primary">abr</name>
</gene>
<comment type="function">
    <text evidence="2">Protein with a unique structure having two opposing regulatory activities toward small GTP-binding proteins. The C-terminus is a GTPase-activating protein domain which stimulates GTP hydrolysis by RAC1, RAC2 and CDC42. Accelerates the intrinsic rate of GTP hydrolysis of RAC1 or CDC42, leading to down-regulation of the active GTP-bound form. The central Dbl homology (DH) domain functions as guanine nucleotide exchange factor (GEF) that modulates the GTPases CDC42, RHOA and RAC1. Promotes the conversion of CDC42, RHOA and RAC1 from the GDP-bound to the GTP-bound form.</text>
</comment>
<comment type="subcellular location">
    <subcellularLocation>
        <location evidence="3">Cell projection</location>
        <location evidence="3">Dendritic spine</location>
    </subcellularLocation>
    <subcellularLocation>
        <location evidence="3">Cell projection</location>
        <location evidence="3">Axon</location>
    </subcellularLocation>
    <subcellularLocation>
        <location evidence="1">Synapse</location>
    </subcellularLocation>
</comment>
<comment type="domain">
    <text evidence="2">The central Dbl homology (DH) domain functions as a guanine nucleotide exchange factor (GEF) that modulates the GTPases CDC42, RHOA and RAC1. Promotes the conversion of CDC42, RHOA and RAC1 from the GDP-bound to the GTP-bound form. The C-terminus is a Rho-GAP domain which stimulates GTP hydrolysis by RAC1, RAC2 and CDC42. The protein has a unique structure having two opposing regulatory activities toward small GTP-binding proteins.</text>
</comment>
<dbReference type="EMBL" id="BC042307">
    <property type="protein sequence ID" value="AAH42307.1"/>
    <property type="molecule type" value="mRNA"/>
</dbReference>
<dbReference type="RefSeq" id="NP_001080209.1">
    <property type="nucleotide sequence ID" value="NM_001086740.1"/>
</dbReference>
<dbReference type="SMR" id="Q8AVG0"/>
<dbReference type="DNASU" id="379901"/>
<dbReference type="GeneID" id="379901"/>
<dbReference type="KEGG" id="xla:379901"/>
<dbReference type="AGR" id="Xenbase:XB-GENE-5797121"/>
<dbReference type="CTD" id="379901"/>
<dbReference type="Xenbase" id="XB-GENE-5797121">
    <property type="gene designation" value="abr.L"/>
</dbReference>
<dbReference type="OrthoDB" id="2155291at2759"/>
<dbReference type="Proteomes" id="UP000186698">
    <property type="component" value="Chromosome 2L"/>
</dbReference>
<dbReference type="Bgee" id="379901">
    <property type="expression patterns" value="Expressed in brain and 19 other cell types or tissues"/>
</dbReference>
<dbReference type="GO" id="GO:0030424">
    <property type="term" value="C:axon"/>
    <property type="evidence" value="ECO:0007669"/>
    <property type="project" value="UniProtKB-SubCell"/>
</dbReference>
<dbReference type="GO" id="GO:0043197">
    <property type="term" value="C:dendritic spine"/>
    <property type="evidence" value="ECO:0007669"/>
    <property type="project" value="UniProtKB-SubCell"/>
</dbReference>
<dbReference type="GO" id="GO:0016020">
    <property type="term" value="C:membrane"/>
    <property type="evidence" value="ECO:0000318"/>
    <property type="project" value="GO_Central"/>
</dbReference>
<dbReference type="GO" id="GO:0005096">
    <property type="term" value="F:GTPase activator activity"/>
    <property type="evidence" value="ECO:0007669"/>
    <property type="project" value="UniProtKB-KW"/>
</dbReference>
<dbReference type="GO" id="GO:0005085">
    <property type="term" value="F:guanyl-nucleotide exchange factor activity"/>
    <property type="evidence" value="ECO:0007669"/>
    <property type="project" value="UniProtKB-KW"/>
</dbReference>
<dbReference type="GO" id="GO:0035556">
    <property type="term" value="P:intracellular signal transduction"/>
    <property type="evidence" value="ECO:0007669"/>
    <property type="project" value="InterPro"/>
</dbReference>
<dbReference type="CDD" id="cd08686">
    <property type="entry name" value="C2_ABR"/>
    <property type="match status" value="1"/>
</dbReference>
<dbReference type="CDD" id="cd13366">
    <property type="entry name" value="PH_ABR"/>
    <property type="match status" value="1"/>
</dbReference>
<dbReference type="CDD" id="cd04387">
    <property type="entry name" value="RhoGAP_Bcr"/>
    <property type="match status" value="1"/>
</dbReference>
<dbReference type="CDD" id="cd00160">
    <property type="entry name" value="RhoGEF"/>
    <property type="match status" value="1"/>
</dbReference>
<dbReference type="FunFam" id="2.60.40.150:FF:000057">
    <property type="entry name" value="active breakpoint cluster region-related protein isoform X1"/>
    <property type="match status" value="1"/>
</dbReference>
<dbReference type="FunFam" id="1.10.555.10:FF:000004">
    <property type="entry name" value="active breakpoint cluster region-related protein-like"/>
    <property type="match status" value="1"/>
</dbReference>
<dbReference type="Gene3D" id="2.60.40.150">
    <property type="entry name" value="C2 domain"/>
    <property type="match status" value="1"/>
</dbReference>
<dbReference type="Gene3D" id="1.20.900.10">
    <property type="entry name" value="Dbl homology (DH) domain"/>
    <property type="match status" value="1"/>
</dbReference>
<dbReference type="Gene3D" id="2.30.29.30">
    <property type="entry name" value="Pleckstrin-homology domain (PH domain)/Phosphotyrosine-binding domain (PTB)"/>
    <property type="match status" value="1"/>
</dbReference>
<dbReference type="Gene3D" id="1.10.555.10">
    <property type="entry name" value="Rho GTPase activation protein"/>
    <property type="match status" value="1"/>
</dbReference>
<dbReference type="InterPro" id="IPR037769">
    <property type="entry name" value="Abr/Bcr"/>
</dbReference>
<dbReference type="InterPro" id="IPR037865">
    <property type="entry name" value="ABR_PH"/>
</dbReference>
<dbReference type="InterPro" id="IPR000008">
    <property type="entry name" value="C2_dom"/>
</dbReference>
<dbReference type="InterPro" id="IPR035892">
    <property type="entry name" value="C2_domain_sf"/>
</dbReference>
<dbReference type="InterPro" id="IPR035899">
    <property type="entry name" value="DBL_dom_sf"/>
</dbReference>
<dbReference type="InterPro" id="IPR000219">
    <property type="entry name" value="DH_dom"/>
</dbReference>
<dbReference type="InterPro" id="IPR001331">
    <property type="entry name" value="GDS_CDC24_CS"/>
</dbReference>
<dbReference type="InterPro" id="IPR011993">
    <property type="entry name" value="PH-like_dom_sf"/>
</dbReference>
<dbReference type="InterPro" id="IPR001849">
    <property type="entry name" value="PH_domain"/>
</dbReference>
<dbReference type="InterPro" id="IPR008936">
    <property type="entry name" value="Rho_GTPase_activation_prot"/>
</dbReference>
<dbReference type="InterPro" id="IPR000198">
    <property type="entry name" value="RhoGAP_dom"/>
</dbReference>
<dbReference type="PANTHER" id="PTHR23182:SF5">
    <property type="entry name" value="ACTIVE BREAKPOINT CLUSTER REGION-RELATED PROTEIN"/>
    <property type="match status" value="1"/>
</dbReference>
<dbReference type="PANTHER" id="PTHR23182">
    <property type="entry name" value="BREAKPOINT CLUSTER REGION PROTEIN BCR"/>
    <property type="match status" value="1"/>
</dbReference>
<dbReference type="Pfam" id="PF00168">
    <property type="entry name" value="C2"/>
    <property type="match status" value="1"/>
</dbReference>
<dbReference type="Pfam" id="PF19057">
    <property type="entry name" value="PH_19"/>
    <property type="match status" value="1"/>
</dbReference>
<dbReference type="Pfam" id="PF00620">
    <property type="entry name" value="RhoGAP"/>
    <property type="match status" value="1"/>
</dbReference>
<dbReference type="Pfam" id="PF00621">
    <property type="entry name" value="RhoGEF"/>
    <property type="match status" value="1"/>
</dbReference>
<dbReference type="SMART" id="SM00239">
    <property type="entry name" value="C2"/>
    <property type="match status" value="1"/>
</dbReference>
<dbReference type="SMART" id="SM00233">
    <property type="entry name" value="PH"/>
    <property type="match status" value="1"/>
</dbReference>
<dbReference type="SMART" id="SM00324">
    <property type="entry name" value="RhoGAP"/>
    <property type="match status" value="1"/>
</dbReference>
<dbReference type="SMART" id="SM00325">
    <property type="entry name" value="RhoGEF"/>
    <property type="match status" value="1"/>
</dbReference>
<dbReference type="SUPFAM" id="SSF49562">
    <property type="entry name" value="C2 domain (Calcium/lipid-binding domain, CaLB)"/>
    <property type="match status" value="1"/>
</dbReference>
<dbReference type="SUPFAM" id="SSF48065">
    <property type="entry name" value="DBL homology domain (DH-domain)"/>
    <property type="match status" value="1"/>
</dbReference>
<dbReference type="SUPFAM" id="SSF48350">
    <property type="entry name" value="GTPase activation domain, GAP"/>
    <property type="match status" value="1"/>
</dbReference>
<dbReference type="SUPFAM" id="SSF50729">
    <property type="entry name" value="PH domain-like"/>
    <property type="match status" value="1"/>
</dbReference>
<dbReference type="PROSITE" id="PS50004">
    <property type="entry name" value="C2"/>
    <property type="match status" value="1"/>
</dbReference>
<dbReference type="PROSITE" id="PS00741">
    <property type="entry name" value="DH_1"/>
    <property type="match status" value="1"/>
</dbReference>
<dbReference type="PROSITE" id="PS50010">
    <property type="entry name" value="DH_2"/>
    <property type="match status" value="1"/>
</dbReference>
<dbReference type="PROSITE" id="PS50003">
    <property type="entry name" value="PH_DOMAIN"/>
    <property type="match status" value="1"/>
</dbReference>
<dbReference type="PROSITE" id="PS50238">
    <property type="entry name" value="RHOGAP"/>
    <property type="match status" value="1"/>
</dbReference>
<protein>
    <recommendedName>
        <fullName>Active breakpoint cluster region-related protein</fullName>
    </recommendedName>
</protein>
<organism>
    <name type="scientific">Xenopus laevis</name>
    <name type="common">African clawed frog</name>
    <dbReference type="NCBI Taxonomy" id="8355"/>
    <lineage>
        <taxon>Eukaryota</taxon>
        <taxon>Metazoa</taxon>
        <taxon>Chordata</taxon>
        <taxon>Craniata</taxon>
        <taxon>Vertebrata</taxon>
        <taxon>Euteleostomi</taxon>
        <taxon>Amphibia</taxon>
        <taxon>Batrachia</taxon>
        <taxon>Anura</taxon>
        <taxon>Pipoidea</taxon>
        <taxon>Pipidae</taxon>
        <taxon>Xenopodinae</taxon>
        <taxon>Xenopus</taxon>
        <taxon>Xenopus</taxon>
    </lineage>
</organism>
<sequence>MEPVSHQDMPRLSWIDTLYSNFNYGTDGYDAEGNEEHKNSREGSETMPYIDESPTMSPQLSARSQDSVDGVSPTPTEVLLPGGESESDKGLLMRKLVLSGVLASEEIYINQLEALLLPMKPLKATASTSQPVLTLQQINDIFYKIEDIYQMHKDFYDKLCPIVQQWDNKTTVGHLFQKLATQLGVYKAFVDNYKFALETAEKCSQCNVQFFKISEDLKVKGPKDSKEQPQSVTMEALLYKPIDRVTRSTLVLHDLLKHTPTDHPDYPLLQDALRISQNFLSSINEDIDPRRTAVTTPKGEPRQLVKDGFLVELSENSRKLRHLFLFTDLLLCAKLKKTTVGKHQQYDCKWYIPLADLVFPSLEESEPIHQLHATPDYEIEEMKAKISVLKSEIQKEKKSNKGSSRAIERLKKKMFEYESWLLLYSPTIPFRIHNKNGKSYLFLLSSDYERSEWREAIQKLQKKDLQALALSPFELQVLTASCFKLRTVHNVPIISHKDDDESPGLYGFLHVIVKSAKGFSHSSNFYCTLEVDSFGYFVSKAKTRVFRDTSEPEWNEEFEIELEGSQCLRILCYETCYDKSKLNKDNNEIVDKIMGKGQIQLDPQGVQSKNWHDDVIEMNGIKVEFSMKFSSRDMSLKRTPSKKQTGVFGVKISVVTKRERSKVPYIVRQCIEEVEKRGIEEVGIYRISGVATDIQALKAAFDANSKDILMMLSDMDINAIAGTLKLYFRELPEPLLTDRLYLAFMEGIALSDPAAKENCMMHLLRSLPDPNLITFLFLLHHLKKVAENEPINKMSLHNLATVFGPTLLRPSEVEIKGHMNLASDIWSHDVMAQVQVLLYYLQHPPISFSELKRSTLYYSTDV</sequence>
<proteinExistence type="evidence at transcript level"/>
<reference key="1">
    <citation type="submission" date="2003-01" db="EMBL/GenBank/DDBJ databases">
        <authorList>
            <consortium name="NIH - Xenopus Gene Collection (XGC) project"/>
        </authorList>
    </citation>
    <scope>NUCLEOTIDE SEQUENCE [LARGE SCALE MRNA]</scope>
    <source>
        <tissue>Embryo</tissue>
    </source>
</reference>
<accession>Q8AVG0</accession>
<feature type="chain" id="PRO_0000355540" description="Active breakpoint cluster region-related protein">
    <location>
        <begin position="1"/>
        <end position="862"/>
    </location>
</feature>
<feature type="domain" description="DH" evidence="5">
    <location>
        <begin position="93"/>
        <end position="286"/>
    </location>
</feature>
<feature type="domain" description="PH" evidence="6">
    <location>
        <begin position="303"/>
        <end position="462"/>
    </location>
</feature>
<feature type="domain" description="C2" evidence="4">
    <location>
        <begin position="488"/>
        <end position="616"/>
    </location>
</feature>
<feature type="domain" description="Rho-GAP" evidence="7">
    <location>
        <begin position="650"/>
        <end position="848"/>
    </location>
</feature>
<feature type="region of interest" description="Disordered" evidence="8">
    <location>
        <begin position="29"/>
        <end position="84"/>
    </location>
</feature>
<feature type="compositionally biased region" description="Basic and acidic residues" evidence="8">
    <location>
        <begin position="34"/>
        <end position="44"/>
    </location>
</feature>
<feature type="compositionally biased region" description="Polar residues" evidence="8">
    <location>
        <begin position="54"/>
        <end position="67"/>
    </location>
</feature>
<feature type="site" description="Arginine finger; crucial for GTP hydrolysis by stabilizing the transition state" evidence="7">
    <location>
        <position position="686"/>
    </location>
</feature>
<evidence type="ECO:0000250" key="1">
    <source>
        <dbReference type="UniProtKB" id="A0A0G2JTR4"/>
    </source>
</evidence>
<evidence type="ECO:0000250" key="2">
    <source>
        <dbReference type="UniProtKB" id="Q12979"/>
    </source>
</evidence>
<evidence type="ECO:0000250" key="3">
    <source>
        <dbReference type="UniProtKB" id="Q5SSL4"/>
    </source>
</evidence>
<evidence type="ECO:0000255" key="4">
    <source>
        <dbReference type="PROSITE-ProRule" id="PRU00041"/>
    </source>
</evidence>
<evidence type="ECO:0000255" key="5">
    <source>
        <dbReference type="PROSITE-ProRule" id="PRU00062"/>
    </source>
</evidence>
<evidence type="ECO:0000255" key="6">
    <source>
        <dbReference type="PROSITE-ProRule" id="PRU00145"/>
    </source>
</evidence>
<evidence type="ECO:0000255" key="7">
    <source>
        <dbReference type="PROSITE-ProRule" id="PRU00172"/>
    </source>
</evidence>
<evidence type="ECO:0000256" key="8">
    <source>
        <dbReference type="SAM" id="MobiDB-lite"/>
    </source>
</evidence>
<name>ABR_XENLA</name>